<feature type="chain" id="PRO_0000275850" description="Teichoic acids export ATP-binding protein TagH">
    <location>
        <begin position="1"/>
        <end position="264"/>
    </location>
</feature>
<feature type="domain" description="ABC transporter" evidence="1">
    <location>
        <begin position="5"/>
        <end position="243"/>
    </location>
</feature>
<feature type="binding site" evidence="1">
    <location>
        <begin position="57"/>
        <end position="64"/>
    </location>
    <ligand>
        <name>ATP</name>
        <dbReference type="ChEBI" id="CHEBI:30616"/>
    </ligand>
</feature>
<proteinExistence type="inferred from homology"/>
<dbReference type="EC" id="7.5.2.4" evidence="1"/>
<dbReference type="EMBL" id="AJ938182">
    <property type="protein sequence ID" value="CAI80275.1"/>
    <property type="status" value="ALT_INIT"/>
    <property type="molecule type" value="Genomic_DNA"/>
</dbReference>
<dbReference type="RefSeq" id="WP_001103232.1">
    <property type="nucleotide sequence ID" value="NC_007622.1"/>
</dbReference>
<dbReference type="SMR" id="Q2YSU3"/>
<dbReference type="GeneID" id="98344978"/>
<dbReference type="KEGG" id="sab:SAB0587c"/>
<dbReference type="HOGENOM" id="CLU_000604_1_2_9"/>
<dbReference type="GO" id="GO:0005886">
    <property type="term" value="C:plasma membrane"/>
    <property type="evidence" value="ECO:0007669"/>
    <property type="project" value="UniProtKB-SubCell"/>
</dbReference>
<dbReference type="GO" id="GO:0015438">
    <property type="term" value="F:ABC-type teichoic acid transporter activity"/>
    <property type="evidence" value="ECO:0007669"/>
    <property type="project" value="UniProtKB-EC"/>
</dbReference>
<dbReference type="GO" id="GO:0005524">
    <property type="term" value="F:ATP binding"/>
    <property type="evidence" value="ECO:0007669"/>
    <property type="project" value="UniProtKB-KW"/>
</dbReference>
<dbReference type="GO" id="GO:0016887">
    <property type="term" value="F:ATP hydrolysis activity"/>
    <property type="evidence" value="ECO:0007669"/>
    <property type="project" value="InterPro"/>
</dbReference>
<dbReference type="CDD" id="cd03220">
    <property type="entry name" value="ABC_KpsT_Wzt"/>
    <property type="match status" value="1"/>
</dbReference>
<dbReference type="FunFam" id="3.40.50.300:FF:003010">
    <property type="entry name" value="Teichoic acids export ATP-binding protein TagH"/>
    <property type="match status" value="1"/>
</dbReference>
<dbReference type="Gene3D" id="3.40.50.300">
    <property type="entry name" value="P-loop containing nucleotide triphosphate hydrolases"/>
    <property type="match status" value="1"/>
</dbReference>
<dbReference type="InterPro" id="IPR003593">
    <property type="entry name" value="AAA+_ATPase"/>
</dbReference>
<dbReference type="InterPro" id="IPR003439">
    <property type="entry name" value="ABC_transporter-like_ATP-bd"/>
</dbReference>
<dbReference type="InterPro" id="IPR017871">
    <property type="entry name" value="ABC_transporter-like_CS"/>
</dbReference>
<dbReference type="InterPro" id="IPR015860">
    <property type="entry name" value="ABC_transpr_TagH-like"/>
</dbReference>
<dbReference type="InterPro" id="IPR050683">
    <property type="entry name" value="Bact_Polysacc_Export_ATP-bd"/>
</dbReference>
<dbReference type="InterPro" id="IPR027417">
    <property type="entry name" value="P-loop_NTPase"/>
</dbReference>
<dbReference type="NCBIfam" id="NF010066">
    <property type="entry name" value="PRK13546.1"/>
    <property type="match status" value="1"/>
</dbReference>
<dbReference type="PANTHER" id="PTHR46743">
    <property type="entry name" value="TEICHOIC ACIDS EXPORT ATP-BINDING PROTEIN TAGH"/>
    <property type="match status" value="1"/>
</dbReference>
<dbReference type="PANTHER" id="PTHR46743:SF2">
    <property type="entry name" value="TEICHOIC ACIDS EXPORT ATP-BINDING PROTEIN TAGH"/>
    <property type="match status" value="1"/>
</dbReference>
<dbReference type="Pfam" id="PF00005">
    <property type="entry name" value="ABC_tran"/>
    <property type="match status" value="1"/>
</dbReference>
<dbReference type="SMART" id="SM00382">
    <property type="entry name" value="AAA"/>
    <property type="match status" value="1"/>
</dbReference>
<dbReference type="SUPFAM" id="SSF52540">
    <property type="entry name" value="P-loop containing nucleoside triphosphate hydrolases"/>
    <property type="match status" value="1"/>
</dbReference>
<dbReference type="PROSITE" id="PS00211">
    <property type="entry name" value="ABC_TRANSPORTER_1"/>
    <property type="match status" value="1"/>
</dbReference>
<dbReference type="PROSITE" id="PS50893">
    <property type="entry name" value="ABC_TRANSPORTER_2"/>
    <property type="match status" value="1"/>
</dbReference>
<dbReference type="PROSITE" id="PS51251">
    <property type="entry name" value="TAGH"/>
    <property type="match status" value="1"/>
</dbReference>
<name>TAGH_STAAB</name>
<keyword id="KW-0067">ATP-binding</keyword>
<keyword id="KW-1003">Cell membrane</keyword>
<keyword id="KW-0472">Membrane</keyword>
<keyword id="KW-0547">Nucleotide-binding</keyword>
<keyword id="KW-1278">Translocase</keyword>
<keyword id="KW-0813">Transport</keyword>
<reference key="1">
    <citation type="journal article" date="2007" name="PLoS ONE">
        <title>Molecular correlates of host specialization in Staphylococcus aureus.</title>
        <authorList>
            <person name="Herron-Olson L."/>
            <person name="Fitzgerald J.R."/>
            <person name="Musser J.M."/>
            <person name="Kapur V."/>
        </authorList>
    </citation>
    <scope>NUCLEOTIDE SEQUENCE [LARGE SCALE GENOMIC DNA]</scope>
    <source>
        <strain>bovine RF122 / ET3-1</strain>
    </source>
</reference>
<sequence>MNVSVNIKNVTKEYRIYRTNKERMKDALIPKHKNKTFFALDDISLKAYEGDVIGLVGINGSGKSTLSNIIGGSLSPTVGKVDRNGEVSVIAISAGLSGQLTGIENIEFKMLCMGFKRKEIKAMTPKIIEFSELGEFIYQPVKKYSSGMRAKLGFSINITVNPDILVIDEALSVGDQTFAQKCLDKIYEFKEQNKTIFFVSHNLGQVRQFCTKIAWIEGGKLKDYGELDDVLPKYEAFLNDFKKKSKAEQKEFRNKLDESRFVIK</sequence>
<accession>Q2YSU3</accession>
<protein>
    <recommendedName>
        <fullName evidence="1">Teichoic acids export ATP-binding protein TagH</fullName>
        <ecNumber evidence="1">7.5.2.4</ecNumber>
    </recommendedName>
</protein>
<comment type="function">
    <text evidence="1">Part of the ABC transporter complex TagGH involved in teichoic acids export. Responsible for energy coupling to the transport system.</text>
</comment>
<comment type="catalytic activity">
    <reaction evidence="1">
        <text>ATP + H2O + teichoic acidSide 1 = ADP + phosphate + teichoic acidSide 2.</text>
        <dbReference type="EC" id="7.5.2.4"/>
    </reaction>
</comment>
<comment type="subunit">
    <text evidence="1">The complex is composed of two ATP-binding proteins (TagH) and two transmembrane proteins (TagG).</text>
</comment>
<comment type="subcellular location">
    <subcellularLocation>
        <location evidence="1">Cell membrane</location>
        <topology evidence="1">Peripheral membrane protein</topology>
    </subcellularLocation>
</comment>
<comment type="similarity">
    <text evidence="1">Belongs to the ABC transporter superfamily. Teichoic acids exporter (TC 3.A.1.104.1) family.</text>
</comment>
<comment type="sequence caution" evidence="2">
    <conflict type="erroneous initiation">
        <sequence resource="EMBL-CDS" id="CAI80275"/>
    </conflict>
</comment>
<organism>
    <name type="scientific">Staphylococcus aureus (strain bovine RF122 / ET3-1)</name>
    <dbReference type="NCBI Taxonomy" id="273036"/>
    <lineage>
        <taxon>Bacteria</taxon>
        <taxon>Bacillati</taxon>
        <taxon>Bacillota</taxon>
        <taxon>Bacilli</taxon>
        <taxon>Bacillales</taxon>
        <taxon>Staphylococcaceae</taxon>
        <taxon>Staphylococcus</taxon>
    </lineage>
</organism>
<gene>
    <name evidence="1" type="primary">tagH</name>
    <name type="ordered locus">SAB0587c</name>
</gene>
<evidence type="ECO:0000255" key="1">
    <source>
        <dbReference type="HAMAP-Rule" id="MF_01715"/>
    </source>
</evidence>
<evidence type="ECO:0000305" key="2"/>